<comment type="catalytic activity">
    <reaction>
        <text>L-arginine + H2O = L-citrulline + NH4(+)</text>
        <dbReference type="Rhea" id="RHEA:19597"/>
        <dbReference type="ChEBI" id="CHEBI:15377"/>
        <dbReference type="ChEBI" id="CHEBI:28938"/>
        <dbReference type="ChEBI" id="CHEBI:32682"/>
        <dbReference type="ChEBI" id="CHEBI:57743"/>
        <dbReference type="EC" id="3.5.3.6"/>
    </reaction>
</comment>
<comment type="pathway">
    <text>Amino-acid degradation; L-arginine degradation via ADI pathway; carbamoyl phosphate from L-arginine: step 1/2.</text>
</comment>
<comment type="subcellular location">
    <subcellularLocation>
        <location evidence="2">Cytoplasm</location>
    </subcellularLocation>
</comment>
<comment type="similarity">
    <text evidence="2">Belongs to the arginine deiminase family.</text>
</comment>
<sequence>MEEEYLNPINIFSEIGRLKKVLLHRPGEELENLTPLIMKNFLFDDIPYLKVARQEHEVFVNILKDNSVEIEYVEDLVSEVLASSVALKNKFISQFILEAEIKTDGVINILKDYFSNLTVDNMVSKMISGVAREELKDCEFSLDDWVNGSSLFVIDPMPNVLFTRDPFASIGNGITINKMYTKVRRRETIFAEYIFKYHSAYKENVPIWFNRWEETSLEGGDEFVLNKDLLVIGISERTEAGSVEKLAASLFKNKAPFSTILAFKIPKNRAYMHLDTVFTQIDYSVFTSFTSDDMYFSIYVLTYNSNSNKINIKKEKAKLKDVLSFYLGRKIDIIKCAGGDLIHGAREQWNDGANVLAIAPGEVIAYSRNHVTNKLFEENGIKVHRIPSSELSRGRGGPRCMSMSLVREDI</sequence>
<keyword id="KW-0056">Arginine metabolism</keyword>
<keyword id="KW-0963">Cytoplasm</keyword>
<keyword id="KW-0378">Hydrolase</keyword>
<keyword id="KW-1185">Reference proteome</keyword>
<gene>
    <name type="primary">arcA</name>
    <name type="ordered locus">BB_0841</name>
</gene>
<feature type="chain" id="PRO_0000182203" description="Arginine deiminase">
    <location>
        <begin position="1"/>
        <end position="410"/>
    </location>
</feature>
<feature type="active site" description="Amidino-cysteine intermediate" evidence="1">
    <location>
        <position position="400"/>
    </location>
</feature>
<organism>
    <name type="scientific">Borreliella burgdorferi (strain ATCC 35210 / DSM 4680 / CIP 102532 / B31)</name>
    <name type="common">Borrelia burgdorferi</name>
    <dbReference type="NCBI Taxonomy" id="224326"/>
    <lineage>
        <taxon>Bacteria</taxon>
        <taxon>Pseudomonadati</taxon>
        <taxon>Spirochaetota</taxon>
        <taxon>Spirochaetia</taxon>
        <taxon>Spirochaetales</taxon>
        <taxon>Borreliaceae</taxon>
        <taxon>Borreliella</taxon>
    </lineage>
</organism>
<protein>
    <recommendedName>
        <fullName>Arginine deiminase</fullName>
        <shortName>ADI</shortName>
        <ecNumber>3.5.3.6</ecNumber>
    </recommendedName>
    <alternativeName>
        <fullName>Arginine dihydrolase</fullName>
        <shortName>AD</shortName>
    </alternativeName>
</protein>
<reference key="1">
    <citation type="journal article" date="1997" name="Nature">
        <title>Genomic sequence of a Lyme disease spirochaete, Borrelia burgdorferi.</title>
        <authorList>
            <person name="Fraser C.M."/>
            <person name="Casjens S."/>
            <person name="Huang W.M."/>
            <person name="Sutton G.G."/>
            <person name="Clayton R.A."/>
            <person name="Lathigra R."/>
            <person name="White O."/>
            <person name="Ketchum K.A."/>
            <person name="Dodson R.J."/>
            <person name="Hickey E.K."/>
            <person name="Gwinn M.L."/>
            <person name="Dougherty B.A."/>
            <person name="Tomb J.-F."/>
            <person name="Fleischmann R.D."/>
            <person name="Richardson D.L."/>
            <person name="Peterson J.D."/>
            <person name="Kerlavage A.R."/>
            <person name="Quackenbush J."/>
            <person name="Salzberg S.L."/>
            <person name="Hanson M."/>
            <person name="van Vugt R."/>
            <person name="Palmer N."/>
            <person name="Adams M.D."/>
            <person name="Gocayne J.D."/>
            <person name="Weidman J.F."/>
            <person name="Utterback T.R."/>
            <person name="Watthey L."/>
            <person name="McDonald L.A."/>
            <person name="Artiach P."/>
            <person name="Bowman C."/>
            <person name="Garland S.A."/>
            <person name="Fujii C."/>
            <person name="Cotton M.D."/>
            <person name="Horst K."/>
            <person name="Roberts K.M."/>
            <person name="Hatch B."/>
            <person name="Smith H.O."/>
            <person name="Venter J.C."/>
        </authorList>
    </citation>
    <scope>NUCLEOTIDE SEQUENCE [LARGE SCALE GENOMIC DNA]</scope>
    <source>
        <strain>ATCC 35210 / DSM 4680 / CIP 102532 / B31</strain>
    </source>
</reference>
<evidence type="ECO:0000250" key="1"/>
<evidence type="ECO:0000305" key="2"/>
<proteinExistence type="inferred from homology"/>
<name>ARCA_BORBU</name>
<dbReference type="EC" id="3.5.3.6"/>
<dbReference type="EMBL" id="AE000783">
    <property type="protein sequence ID" value="AAC67191.1"/>
    <property type="molecule type" value="Genomic_DNA"/>
</dbReference>
<dbReference type="PIR" id="H70204">
    <property type="entry name" value="H70204"/>
</dbReference>
<dbReference type="RefSeq" id="NP_212975.1">
    <property type="nucleotide sequence ID" value="NC_001318.1"/>
</dbReference>
<dbReference type="RefSeq" id="WP_002557431.1">
    <property type="nucleotide sequence ID" value="NC_001318.1"/>
</dbReference>
<dbReference type="SMR" id="O51781"/>
<dbReference type="STRING" id="224326.BB_0841"/>
<dbReference type="PaxDb" id="224326-BB_0841"/>
<dbReference type="EnsemblBacteria" id="AAC67191">
    <property type="protein sequence ID" value="AAC67191"/>
    <property type="gene ID" value="BB_0841"/>
</dbReference>
<dbReference type="GeneID" id="56567419"/>
<dbReference type="KEGG" id="bbu:BB_0841"/>
<dbReference type="PATRIC" id="fig|224326.49.peg.1234"/>
<dbReference type="HOGENOM" id="CLU_052662_0_1_12"/>
<dbReference type="OrthoDB" id="9807502at2"/>
<dbReference type="UniPathway" id="UPA00254">
    <property type="reaction ID" value="UER00364"/>
</dbReference>
<dbReference type="Proteomes" id="UP000001807">
    <property type="component" value="Chromosome"/>
</dbReference>
<dbReference type="GO" id="GO:0005737">
    <property type="term" value="C:cytoplasm"/>
    <property type="evidence" value="ECO:0007669"/>
    <property type="project" value="UniProtKB-SubCell"/>
</dbReference>
<dbReference type="GO" id="GO:0016990">
    <property type="term" value="F:arginine deiminase activity"/>
    <property type="evidence" value="ECO:0007669"/>
    <property type="project" value="UniProtKB-UniRule"/>
</dbReference>
<dbReference type="GO" id="GO:0019547">
    <property type="term" value="P:arginine catabolic process to ornithine"/>
    <property type="evidence" value="ECO:0007669"/>
    <property type="project" value="UniProtKB-UniRule"/>
</dbReference>
<dbReference type="GO" id="GO:0019546">
    <property type="term" value="P:arginine deiminase pathway"/>
    <property type="evidence" value="ECO:0007669"/>
    <property type="project" value="TreeGrafter"/>
</dbReference>
<dbReference type="Gene3D" id="1.10.3930.10">
    <property type="entry name" value="Arginine deiminase"/>
    <property type="match status" value="1"/>
</dbReference>
<dbReference type="Gene3D" id="3.75.10.10">
    <property type="entry name" value="L-arginine/glycine Amidinotransferase, Chain A"/>
    <property type="match status" value="1"/>
</dbReference>
<dbReference type="HAMAP" id="MF_00242">
    <property type="entry name" value="Arg_deiminase"/>
    <property type="match status" value="1"/>
</dbReference>
<dbReference type="InterPro" id="IPR003876">
    <property type="entry name" value="Arg_deiminase"/>
</dbReference>
<dbReference type="NCBIfam" id="TIGR01078">
    <property type="entry name" value="arcA"/>
    <property type="match status" value="1"/>
</dbReference>
<dbReference type="NCBIfam" id="NF002381">
    <property type="entry name" value="PRK01388.1"/>
    <property type="match status" value="1"/>
</dbReference>
<dbReference type="PANTHER" id="PTHR47271">
    <property type="entry name" value="ARGININE DEIMINASE"/>
    <property type="match status" value="1"/>
</dbReference>
<dbReference type="PANTHER" id="PTHR47271:SF2">
    <property type="entry name" value="ARGININE DEIMINASE"/>
    <property type="match status" value="1"/>
</dbReference>
<dbReference type="Pfam" id="PF02274">
    <property type="entry name" value="ADI"/>
    <property type="match status" value="1"/>
</dbReference>
<dbReference type="PIRSF" id="PIRSF006356">
    <property type="entry name" value="Arg_deiminase"/>
    <property type="match status" value="1"/>
</dbReference>
<dbReference type="PRINTS" id="PR01466">
    <property type="entry name" value="ARGDEIMINASE"/>
</dbReference>
<dbReference type="SUPFAM" id="SSF55909">
    <property type="entry name" value="Pentein"/>
    <property type="match status" value="1"/>
</dbReference>
<accession>O51781</accession>